<name>ATPA_SINFN</name>
<dbReference type="EC" id="7.1.2.2" evidence="1"/>
<dbReference type="EMBL" id="CP001389">
    <property type="protein sequence ID" value="ACP26848.1"/>
    <property type="molecule type" value="Genomic_DNA"/>
</dbReference>
<dbReference type="RefSeq" id="WP_012709600.1">
    <property type="nucleotide sequence ID" value="NC_012587.1"/>
</dbReference>
<dbReference type="RefSeq" id="YP_002827601.1">
    <property type="nucleotide sequence ID" value="NC_012587.1"/>
</dbReference>
<dbReference type="SMR" id="C3M9S3"/>
<dbReference type="STRING" id="394.NGR_c31130"/>
<dbReference type="KEGG" id="rhi:NGR_c31130"/>
<dbReference type="PATRIC" id="fig|394.7.peg.5951"/>
<dbReference type="eggNOG" id="COG0056">
    <property type="taxonomic scope" value="Bacteria"/>
</dbReference>
<dbReference type="HOGENOM" id="CLU_010091_2_1_5"/>
<dbReference type="OrthoDB" id="9803053at2"/>
<dbReference type="Proteomes" id="UP000001054">
    <property type="component" value="Chromosome"/>
</dbReference>
<dbReference type="GO" id="GO:0005886">
    <property type="term" value="C:plasma membrane"/>
    <property type="evidence" value="ECO:0007669"/>
    <property type="project" value="UniProtKB-SubCell"/>
</dbReference>
<dbReference type="GO" id="GO:0045259">
    <property type="term" value="C:proton-transporting ATP synthase complex"/>
    <property type="evidence" value="ECO:0007669"/>
    <property type="project" value="UniProtKB-KW"/>
</dbReference>
<dbReference type="GO" id="GO:0043531">
    <property type="term" value="F:ADP binding"/>
    <property type="evidence" value="ECO:0007669"/>
    <property type="project" value="TreeGrafter"/>
</dbReference>
<dbReference type="GO" id="GO:0005524">
    <property type="term" value="F:ATP binding"/>
    <property type="evidence" value="ECO:0007669"/>
    <property type="project" value="UniProtKB-UniRule"/>
</dbReference>
<dbReference type="GO" id="GO:0046933">
    <property type="term" value="F:proton-transporting ATP synthase activity, rotational mechanism"/>
    <property type="evidence" value="ECO:0007669"/>
    <property type="project" value="UniProtKB-UniRule"/>
</dbReference>
<dbReference type="CDD" id="cd18113">
    <property type="entry name" value="ATP-synt_F1_alpha_C"/>
    <property type="match status" value="1"/>
</dbReference>
<dbReference type="CDD" id="cd18116">
    <property type="entry name" value="ATP-synt_F1_alpha_N"/>
    <property type="match status" value="1"/>
</dbReference>
<dbReference type="CDD" id="cd01132">
    <property type="entry name" value="F1-ATPase_alpha_CD"/>
    <property type="match status" value="1"/>
</dbReference>
<dbReference type="FunFam" id="1.20.150.20:FF:000001">
    <property type="entry name" value="ATP synthase subunit alpha"/>
    <property type="match status" value="1"/>
</dbReference>
<dbReference type="FunFam" id="2.40.30.20:FF:000001">
    <property type="entry name" value="ATP synthase subunit alpha"/>
    <property type="match status" value="1"/>
</dbReference>
<dbReference type="FunFam" id="3.40.50.300:FF:002432">
    <property type="entry name" value="ATP synthase subunit alpha, mitochondrial"/>
    <property type="match status" value="1"/>
</dbReference>
<dbReference type="Gene3D" id="2.40.30.20">
    <property type="match status" value="1"/>
</dbReference>
<dbReference type="Gene3D" id="1.20.150.20">
    <property type="entry name" value="ATP synthase alpha/beta chain, C-terminal domain"/>
    <property type="match status" value="1"/>
</dbReference>
<dbReference type="Gene3D" id="3.40.50.300">
    <property type="entry name" value="P-loop containing nucleotide triphosphate hydrolases"/>
    <property type="match status" value="1"/>
</dbReference>
<dbReference type="HAMAP" id="MF_01346">
    <property type="entry name" value="ATP_synth_alpha_bact"/>
    <property type="match status" value="1"/>
</dbReference>
<dbReference type="InterPro" id="IPR023366">
    <property type="entry name" value="ATP_synth_asu-like_sf"/>
</dbReference>
<dbReference type="InterPro" id="IPR000793">
    <property type="entry name" value="ATP_synth_asu_C"/>
</dbReference>
<dbReference type="InterPro" id="IPR038376">
    <property type="entry name" value="ATP_synth_asu_C_sf"/>
</dbReference>
<dbReference type="InterPro" id="IPR033732">
    <property type="entry name" value="ATP_synth_F1_a_nt-bd_dom"/>
</dbReference>
<dbReference type="InterPro" id="IPR005294">
    <property type="entry name" value="ATP_synth_F1_asu"/>
</dbReference>
<dbReference type="InterPro" id="IPR020003">
    <property type="entry name" value="ATPase_a/bsu_AS"/>
</dbReference>
<dbReference type="InterPro" id="IPR004100">
    <property type="entry name" value="ATPase_F1/V1/A1_a/bsu_N"/>
</dbReference>
<dbReference type="InterPro" id="IPR036121">
    <property type="entry name" value="ATPase_F1/V1/A1_a/bsu_N_sf"/>
</dbReference>
<dbReference type="InterPro" id="IPR000194">
    <property type="entry name" value="ATPase_F1/V1/A1_a/bsu_nucl-bd"/>
</dbReference>
<dbReference type="InterPro" id="IPR027417">
    <property type="entry name" value="P-loop_NTPase"/>
</dbReference>
<dbReference type="NCBIfam" id="TIGR00962">
    <property type="entry name" value="atpA"/>
    <property type="match status" value="1"/>
</dbReference>
<dbReference type="NCBIfam" id="NF009884">
    <property type="entry name" value="PRK13343.1"/>
    <property type="match status" value="1"/>
</dbReference>
<dbReference type="PANTHER" id="PTHR48082">
    <property type="entry name" value="ATP SYNTHASE SUBUNIT ALPHA, MITOCHONDRIAL"/>
    <property type="match status" value="1"/>
</dbReference>
<dbReference type="PANTHER" id="PTHR48082:SF2">
    <property type="entry name" value="ATP SYNTHASE SUBUNIT ALPHA, MITOCHONDRIAL"/>
    <property type="match status" value="1"/>
</dbReference>
<dbReference type="Pfam" id="PF00006">
    <property type="entry name" value="ATP-synt_ab"/>
    <property type="match status" value="1"/>
</dbReference>
<dbReference type="Pfam" id="PF00306">
    <property type="entry name" value="ATP-synt_ab_C"/>
    <property type="match status" value="1"/>
</dbReference>
<dbReference type="Pfam" id="PF02874">
    <property type="entry name" value="ATP-synt_ab_N"/>
    <property type="match status" value="1"/>
</dbReference>
<dbReference type="PIRSF" id="PIRSF039088">
    <property type="entry name" value="F_ATPase_subunit_alpha"/>
    <property type="match status" value="1"/>
</dbReference>
<dbReference type="SUPFAM" id="SSF47917">
    <property type="entry name" value="C-terminal domain of alpha and beta subunits of F1 ATP synthase"/>
    <property type="match status" value="1"/>
</dbReference>
<dbReference type="SUPFAM" id="SSF50615">
    <property type="entry name" value="N-terminal domain of alpha and beta subunits of F1 ATP synthase"/>
    <property type="match status" value="1"/>
</dbReference>
<dbReference type="SUPFAM" id="SSF52540">
    <property type="entry name" value="P-loop containing nucleoside triphosphate hydrolases"/>
    <property type="match status" value="1"/>
</dbReference>
<dbReference type="PROSITE" id="PS00152">
    <property type="entry name" value="ATPASE_ALPHA_BETA"/>
    <property type="match status" value="1"/>
</dbReference>
<comment type="function">
    <text evidence="1">Produces ATP from ADP in the presence of a proton gradient across the membrane. The alpha chain is a regulatory subunit.</text>
</comment>
<comment type="catalytic activity">
    <reaction evidence="1">
        <text>ATP + H2O + 4 H(+)(in) = ADP + phosphate + 5 H(+)(out)</text>
        <dbReference type="Rhea" id="RHEA:57720"/>
        <dbReference type="ChEBI" id="CHEBI:15377"/>
        <dbReference type="ChEBI" id="CHEBI:15378"/>
        <dbReference type="ChEBI" id="CHEBI:30616"/>
        <dbReference type="ChEBI" id="CHEBI:43474"/>
        <dbReference type="ChEBI" id="CHEBI:456216"/>
        <dbReference type="EC" id="7.1.2.2"/>
    </reaction>
</comment>
<comment type="subunit">
    <text evidence="1">F-type ATPases have 2 components, CF(1) - the catalytic core - and CF(0) - the membrane proton channel. CF(1) has five subunits: alpha(3), beta(3), gamma(1), delta(1), epsilon(1). CF(0) has three main subunits: a(1), b(2) and c(9-12). The alpha and beta chains form an alternating ring which encloses part of the gamma chain. CF(1) is attached to CF(0) by a central stalk formed by the gamma and epsilon chains, while a peripheral stalk is formed by the delta and b chains.</text>
</comment>
<comment type="subcellular location">
    <subcellularLocation>
        <location evidence="1">Cell inner membrane</location>
        <topology evidence="1">Peripheral membrane protein</topology>
    </subcellularLocation>
</comment>
<comment type="similarity">
    <text evidence="1">Belongs to the ATPase alpha/beta chains family.</text>
</comment>
<protein>
    <recommendedName>
        <fullName evidence="1">ATP synthase subunit alpha</fullName>
        <ecNumber evidence="1">7.1.2.2</ecNumber>
    </recommendedName>
    <alternativeName>
        <fullName evidence="1">ATP synthase F1 sector subunit alpha</fullName>
    </alternativeName>
    <alternativeName>
        <fullName evidence="1">F-ATPase subunit alpha</fullName>
    </alternativeName>
</protein>
<gene>
    <name evidence="1" type="primary">atpA</name>
    <name type="ordered locus">NGR_c31130</name>
</gene>
<feature type="chain" id="PRO_1000166550" description="ATP synthase subunit alpha">
    <location>
        <begin position="1"/>
        <end position="509"/>
    </location>
</feature>
<feature type="binding site" evidence="1">
    <location>
        <begin position="169"/>
        <end position="176"/>
    </location>
    <ligand>
        <name>ATP</name>
        <dbReference type="ChEBI" id="CHEBI:30616"/>
    </ligand>
</feature>
<feature type="site" description="Required for activity" evidence="1">
    <location>
        <position position="370"/>
    </location>
</feature>
<accession>C3M9S3</accession>
<reference key="1">
    <citation type="journal article" date="2009" name="Appl. Environ. Microbiol.">
        <title>Rhizobium sp. strain NGR234 possesses a remarkable number of secretion systems.</title>
        <authorList>
            <person name="Schmeisser C."/>
            <person name="Liesegang H."/>
            <person name="Krysciak D."/>
            <person name="Bakkou N."/>
            <person name="Le Quere A."/>
            <person name="Wollherr A."/>
            <person name="Heinemeyer I."/>
            <person name="Morgenstern B."/>
            <person name="Pommerening-Roeser A."/>
            <person name="Flores M."/>
            <person name="Palacios R."/>
            <person name="Brenner S."/>
            <person name="Gottschalk G."/>
            <person name="Schmitz R.A."/>
            <person name="Broughton W.J."/>
            <person name="Perret X."/>
            <person name="Strittmatter A.W."/>
            <person name="Streit W.R."/>
        </authorList>
    </citation>
    <scope>NUCLEOTIDE SEQUENCE [LARGE SCALE GENOMIC DNA]</scope>
    <source>
        <strain>NBRC 101917 / NGR234</strain>
    </source>
</reference>
<organism>
    <name type="scientific">Sinorhizobium fredii (strain NBRC 101917 / NGR234)</name>
    <dbReference type="NCBI Taxonomy" id="394"/>
    <lineage>
        <taxon>Bacteria</taxon>
        <taxon>Pseudomonadati</taxon>
        <taxon>Pseudomonadota</taxon>
        <taxon>Alphaproteobacteria</taxon>
        <taxon>Hyphomicrobiales</taxon>
        <taxon>Rhizobiaceae</taxon>
        <taxon>Sinorhizobium/Ensifer group</taxon>
        <taxon>Sinorhizobium</taxon>
    </lineage>
</organism>
<sequence length="509" mass="54773">MDIRAAEISAILKDQIKNFGQEAEVSEVGQVLSVGDGIARVYGLDNVQAGEMVEFPGGIRGMALNLEADNVGVVIFGSDRDIKEGDTVKRTGAIVDVPVGPELLGRVVDALGNPIDGKGPINAKQRSRVDIKAPGIIPRKSVHEPMSTGLKAIDALIPVGRGQRELVIGDRQTGKTAIILDTILNQKAIHDNGPEGDKLYCVYVAIGQKRSTVAQFVKVLEERGALQYSIIVAATASDPAPMQYLAPFAGCAMGEYFRDNGKHALIGYDDLSKQAVAYRQMSLLLRRPPGREAYPGDVFYLHSRLLERAAKLNDDNGAGSLTALPVIETQGNDVSAFIPTNVISITDGQIFLETDLFYQGIRPAVNVGLSVSRVGSSAQIKAMKQVAGSIKGELAQYREMAAFAQFGSDLDAATQRLLNRGARLTELLKQPQFSPLKTEEQVAVIFAGVNGYLDKLPVNQVGKFEQGLLSYLRSEGKAVLDTIRTEKAISDDTKAKLKTAIDSFSKSFA</sequence>
<keyword id="KW-0066">ATP synthesis</keyword>
<keyword id="KW-0067">ATP-binding</keyword>
<keyword id="KW-0997">Cell inner membrane</keyword>
<keyword id="KW-1003">Cell membrane</keyword>
<keyword id="KW-0139">CF(1)</keyword>
<keyword id="KW-0375">Hydrogen ion transport</keyword>
<keyword id="KW-0406">Ion transport</keyword>
<keyword id="KW-0472">Membrane</keyword>
<keyword id="KW-0547">Nucleotide-binding</keyword>
<keyword id="KW-1185">Reference proteome</keyword>
<keyword id="KW-1278">Translocase</keyword>
<keyword id="KW-0813">Transport</keyword>
<evidence type="ECO:0000255" key="1">
    <source>
        <dbReference type="HAMAP-Rule" id="MF_01346"/>
    </source>
</evidence>
<proteinExistence type="inferred from homology"/>